<name>DIP2A_HUMAN</name>
<feature type="chain" id="PRO_0000079906" description="Disco-interacting protein 2 homolog A">
    <location>
        <begin position="1"/>
        <end position="1571"/>
    </location>
</feature>
<feature type="domain" description="DMAP1-binding" evidence="2">
    <location>
        <begin position="9"/>
        <end position="127"/>
    </location>
</feature>
<feature type="region of interest" description="Disordered" evidence="3">
    <location>
        <begin position="60"/>
        <end position="203"/>
    </location>
</feature>
<feature type="region of interest" description="Disordered" evidence="3">
    <location>
        <begin position="302"/>
        <end position="327"/>
    </location>
</feature>
<feature type="short sequence motif" description="PXXP motif; required for interaction with CTTN" evidence="1">
    <location>
        <begin position="283"/>
        <end position="286"/>
    </location>
</feature>
<feature type="short sequence motif" description="PXXP motif; required for interaction with CTTN" evidence="1">
    <location>
        <begin position="307"/>
        <end position="310"/>
    </location>
</feature>
<feature type="compositionally biased region" description="Basic and acidic residues" evidence="3">
    <location>
        <begin position="86"/>
        <end position="98"/>
    </location>
</feature>
<feature type="compositionally biased region" description="Polar residues" evidence="3">
    <location>
        <begin position="127"/>
        <end position="139"/>
    </location>
</feature>
<feature type="compositionally biased region" description="Polar residues" evidence="3">
    <location>
        <begin position="152"/>
        <end position="162"/>
    </location>
</feature>
<feature type="compositionally biased region" description="Low complexity" evidence="3">
    <location>
        <begin position="174"/>
        <end position="203"/>
    </location>
</feature>
<feature type="modified residue" description="Phosphoserine" evidence="10">
    <location>
        <position position="94"/>
    </location>
</feature>
<feature type="modified residue" description="Phosphothreonine" evidence="1">
    <location>
        <position position="132"/>
    </location>
</feature>
<feature type="modified residue" description="Phosphothreonine" evidence="10">
    <location>
        <position position="155"/>
    </location>
</feature>
<feature type="splice variant" id="VSP_045408" description="In isoform 5." evidence="7">
    <location>
        <begin position="31"/>
        <end position="94"/>
    </location>
</feature>
<feature type="splice variant" id="VSP_007748" description="In isoform 3." evidence="8">
    <location>
        <begin position="219"/>
        <end position="261"/>
    </location>
</feature>
<feature type="splice variant" id="VSP_047246" description="In isoform 6." evidence="6">
    <location>
        <begin position="302"/>
        <end position="305"/>
    </location>
</feature>
<feature type="splice variant" id="VSP_007749" description="In isoform 2 and isoform 3." evidence="7 8">
    <location>
        <begin position="842"/>
        <end position="1571"/>
    </location>
</feature>
<feature type="splice variant" id="VSP_007750" description="In isoform 4." evidence="8">
    <original>AIDSIHQVGV</original>
    <variation>VGAPARPMVR</variation>
    <location>
        <begin position="880"/>
        <end position="889"/>
    </location>
</feature>
<feature type="splice variant" id="VSP_007751" description="In isoform 4." evidence="8">
    <location>
        <begin position="890"/>
        <end position="1571"/>
    </location>
</feature>
<feature type="splice variant" id="VSP_045409" description="In isoform 5." evidence="7">
    <original>MSHAATSA</original>
    <variation>AGRGGSRL</variation>
    <location>
        <begin position="1167"/>
        <end position="1174"/>
    </location>
</feature>
<feature type="splice variant" id="VSP_045410" description="In isoform 5." evidence="7">
    <location>
        <begin position="1175"/>
        <end position="1571"/>
    </location>
</feature>
<feature type="sequence variant" id="VAR_047372" description="In dbSNP:rs7283507.">
    <original>P</original>
    <variation>A</variation>
    <location>
        <position position="191"/>
    </location>
</feature>
<feature type="sequence variant" id="VAR_047373" description="In dbSNP:rs16979312.">
    <original>S</original>
    <variation>N</variation>
    <location>
        <position position="372"/>
    </location>
</feature>
<feature type="sequence conflict" description="In Ref. 3; BAG64412." evidence="9" ref="3">
    <original>V</original>
    <variation>F</variation>
    <location>
        <position position="702"/>
    </location>
</feature>
<feature type="sequence conflict" description="In Ref. 2; BAF69070." evidence="9" ref="2">
    <original>P</original>
    <variation>L</variation>
    <location>
        <position position="1541"/>
    </location>
</feature>
<accession>Q14689</accession>
<accession>A6P4T3</accession>
<accession>B4E0F0</accession>
<accession>E7EMA5</accession>
<accession>Q8IVA3</accession>
<accession>Q8N4S2</accession>
<accession>Q8TD89</accession>
<accession>Q96ML9</accession>
<evidence type="ECO:0000250" key="1">
    <source>
        <dbReference type="UniProtKB" id="Q8BWT5"/>
    </source>
</evidence>
<evidence type="ECO:0000255" key="2">
    <source>
        <dbReference type="PROSITE-ProRule" id="PRU01260"/>
    </source>
</evidence>
<evidence type="ECO:0000256" key="3">
    <source>
        <dbReference type="SAM" id="MobiDB-lite"/>
    </source>
</evidence>
<evidence type="ECO:0000269" key="4">
    <source>
    </source>
</evidence>
<evidence type="ECO:0000269" key="5">
    <source>
    </source>
</evidence>
<evidence type="ECO:0000303" key="6">
    <source>
    </source>
</evidence>
<evidence type="ECO:0000303" key="7">
    <source>
    </source>
</evidence>
<evidence type="ECO:0000303" key="8">
    <source>
    </source>
</evidence>
<evidence type="ECO:0000305" key="9"/>
<evidence type="ECO:0007744" key="10">
    <source>
    </source>
</evidence>
<comment type="function">
    <text evidence="1 4">Catalyzes the de novo synthesis of acetyl-CoA in vitro (By similarity). Promotes acetylation of CTTN, possibly by providing the acetyl donor, ensuring correct dendritic spine morphology and synaptic transmission (By similarity). Binds to follistatin-related protein FSTL1 and may act as a cell surface receptor for FSTL1, contributing to AKT activation and subsequent FSTL1-induced survival and function of endothelial cells and cardiac myocytes (PubMed:20054002).</text>
</comment>
<comment type="catalytic activity">
    <reaction evidence="1">
        <text>acetate + ATP + CoA = acetyl-CoA + AMP + diphosphate</text>
        <dbReference type="Rhea" id="RHEA:23176"/>
        <dbReference type="ChEBI" id="CHEBI:30089"/>
        <dbReference type="ChEBI" id="CHEBI:30616"/>
        <dbReference type="ChEBI" id="CHEBI:33019"/>
        <dbReference type="ChEBI" id="CHEBI:57287"/>
        <dbReference type="ChEBI" id="CHEBI:57288"/>
        <dbReference type="ChEBI" id="CHEBI:456215"/>
        <dbReference type="EC" id="6.2.1.1"/>
    </reaction>
</comment>
<comment type="subunit">
    <text evidence="1 4 5">Interacts with FSTL1; DIP2A may act as a cell surface receptor for FSTL1 (PubMed:20054002, PubMed:20860622). Interacts (via N-terminus) with CTTN (via SH3 domain); the interaction promotes acetylation of CTTN and is required for proper synaptic transmission (By similarity). Interacts with SHANK3 (By similarity).</text>
</comment>
<comment type="interaction">
    <interactant intactId="EBI-2564275">
        <id>Q14689</id>
    </interactant>
    <interactant intactId="EBI-745689">
        <id>Q7L5A3</id>
        <label>ATOSB</label>
    </interactant>
    <organismsDiffer>false</organismsDiffer>
    <experiments>3</experiments>
</comment>
<comment type="interaction">
    <interactant intactId="EBI-2564275">
        <id>Q14689</id>
    </interactant>
    <interactant intactId="EBI-744115">
        <id>Q9C0F1</id>
        <label>CEP44</label>
    </interactant>
    <organismsDiffer>false</organismsDiffer>
    <experiments>3</experiments>
</comment>
<comment type="interaction">
    <interactant intactId="EBI-2564275">
        <id>Q14689</id>
    </interactant>
    <interactant intactId="EBI-1571188">
        <id>P19883</id>
        <label>FST</label>
    </interactant>
    <organismsDiffer>false</organismsDiffer>
    <experiments>2</experiments>
</comment>
<comment type="interaction">
    <interactant intactId="EBI-2564275">
        <id>Q14689</id>
    </interactant>
    <interactant intactId="EBI-2349801">
        <id>Q12841</id>
        <label>FSTL1</label>
    </interactant>
    <organismsDiffer>false</organismsDiffer>
    <experiments>4</experiments>
</comment>
<comment type="interaction">
    <interactant intactId="EBI-2564275">
        <id>Q14689</id>
    </interactant>
    <interactant intactId="EBI-5666657">
        <id>Q9NWQ4</id>
        <label>GPATCH2L</label>
    </interactant>
    <organismsDiffer>false</organismsDiffer>
    <experiments>3</experiments>
</comment>
<comment type="interaction">
    <interactant intactId="EBI-2564275">
        <id>Q14689</id>
    </interactant>
    <interactant intactId="EBI-779636">
        <id>P01137</id>
        <label>TGFB1</label>
    </interactant>
    <organismsDiffer>false</organismsDiffer>
    <experiments>2</experiments>
</comment>
<comment type="interaction">
    <interactant intactId="EBI-2564275">
        <id>Q14689</id>
    </interactant>
    <interactant intactId="EBI-358993">
        <id>Q15645</id>
        <label>TRIP13</label>
    </interactant>
    <organismsDiffer>false</organismsDiffer>
    <experiments>3</experiments>
</comment>
<comment type="interaction">
    <interactant intactId="EBI-2564275">
        <id>Q14689</id>
    </interactant>
    <interactant intactId="EBI-2564326">
        <id>Q62356</id>
        <label>Fstl1</label>
    </interactant>
    <organismsDiffer>true</organismsDiffer>
    <experiments>3</experiments>
</comment>
<comment type="interaction">
    <interactant intactId="EBI-25858204">
        <id>Q14689-3</id>
    </interactant>
    <interactant intactId="EBI-702390">
        <id>Q9UBB4</id>
        <label>ATXN10</label>
    </interactant>
    <organismsDiffer>false</organismsDiffer>
    <experiments>3</experiments>
</comment>
<comment type="interaction">
    <interactant intactId="EBI-25858204">
        <id>Q14689-3</id>
    </interactant>
    <interactant intactId="EBI-744302">
        <id>P14136</id>
        <label>GFAP</label>
    </interactant>
    <organismsDiffer>false</organismsDiffer>
    <experiments>3</experiments>
</comment>
<comment type="interaction">
    <interactant intactId="EBI-12019962">
        <id>Q14689-4</id>
    </interactant>
    <interactant intactId="EBI-10220600">
        <id>Q8NA54</id>
        <label>IQUB</label>
    </interactant>
    <organismsDiffer>false</organismsDiffer>
    <experiments>3</experiments>
</comment>
<comment type="interaction">
    <interactant intactId="EBI-10233719">
        <id>Q14689-6</id>
    </interactant>
    <interactant intactId="EBI-10173507">
        <id>Q6UY14-3</id>
        <label>ADAMTSL4</label>
    </interactant>
    <organismsDiffer>false</organismsDiffer>
    <experiments>3</experiments>
</comment>
<comment type="interaction">
    <interactant intactId="EBI-10233719">
        <id>Q14689-6</id>
    </interactant>
    <interactant intactId="EBI-10182361">
        <id>Q9NS73-5</id>
        <label>MBIP</label>
    </interactant>
    <organismsDiffer>false</organismsDiffer>
    <experiments>3</experiments>
</comment>
<comment type="interaction">
    <interactant intactId="EBI-10233719">
        <id>Q14689-6</id>
    </interactant>
    <interactant intactId="EBI-355546">
        <id>P61289</id>
        <label>PSME3</label>
    </interactant>
    <organismsDiffer>false</organismsDiffer>
    <experiments>3</experiments>
</comment>
<comment type="interaction">
    <interactant intactId="EBI-10233719">
        <id>Q14689-6</id>
    </interactant>
    <interactant intactId="EBI-1047946">
        <id>P26045</id>
        <label>PTPN3</label>
    </interactant>
    <organismsDiffer>false</organismsDiffer>
    <experiments>3</experiments>
</comment>
<comment type="interaction">
    <interactant intactId="EBI-10233719">
        <id>Q14689-6</id>
    </interactant>
    <interactant intactId="EBI-741237">
        <id>O60504</id>
        <label>SORBS3</label>
    </interactant>
    <organismsDiffer>false</organismsDiffer>
    <experiments>3</experiments>
</comment>
<comment type="interaction">
    <interactant intactId="EBI-10233719">
        <id>Q14689-6</id>
    </interactant>
    <interactant intactId="EBI-745680">
        <id>Q96MF2</id>
        <label>STAC3</label>
    </interactant>
    <organismsDiffer>false</organismsDiffer>
    <experiments>3</experiments>
</comment>
<comment type="interaction">
    <interactant intactId="EBI-10233719">
        <id>Q14689-6</id>
    </interactant>
    <interactant intactId="EBI-717810">
        <id>Q08117</id>
        <label>TLE5</label>
    </interactant>
    <organismsDiffer>false</organismsDiffer>
    <experiments>3</experiments>
</comment>
<comment type="interaction">
    <interactant intactId="EBI-10233719">
        <id>Q14689-6</id>
    </interactant>
    <interactant intactId="EBI-739510">
        <id>Q9HCM9</id>
        <label>TRIM39</label>
    </interactant>
    <organismsDiffer>false</organismsDiffer>
    <experiments>3</experiments>
</comment>
<comment type="interaction">
    <interactant intactId="EBI-10233719">
        <id>Q14689-6</id>
    </interactant>
    <interactant intactId="EBI-358993">
        <id>Q15645</id>
        <label>TRIP13</label>
    </interactant>
    <organismsDiffer>false</organismsDiffer>
    <experiments>3</experiments>
</comment>
<comment type="interaction">
    <interactant intactId="EBI-10233719">
        <id>Q14689-6</id>
    </interactant>
    <interactant intactId="EBI-740718">
        <id>O43298</id>
        <label>ZBTB43</label>
    </interactant>
    <organismsDiffer>false</organismsDiffer>
    <experiments>3</experiments>
</comment>
<comment type="subcellular location">
    <subcellularLocation>
        <location evidence="4">Cell membrane</location>
        <topology evidence="9">Peripheral membrane protein</topology>
    </subcellularLocation>
    <subcellularLocation>
        <location evidence="1">Mitochondrion</location>
    </subcellularLocation>
    <subcellularLocation>
        <location evidence="1">Cell projection</location>
        <location evidence="1">Dendritic spine</location>
    </subcellularLocation>
</comment>
<comment type="alternative products">
    <event type="alternative splicing"/>
    <isoform>
        <id>Q14689-1</id>
        <name>1</name>
        <sequence type="displayed"/>
    </isoform>
    <isoform>
        <id>Q14689-2</id>
        <name>2</name>
        <sequence type="described" ref="VSP_007749"/>
    </isoform>
    <isoform>
        <id>Q14689-3</id>
        <name>3</name>
        <sequence type="described" ref="VSP_007748 VSP_007749"/>
    </isoform>
    <isoform>
        <id>Q14689-4</id>
        <name>4</name>
        <sequence type="described" ref="VSP_007750 VSP_007751"/>
    </isoform>
    <isoform>
        <id>Q14689-5</id>
        <name>5</name>
        <sequence type="described" ref="VSP_045408 VSP_045409 VSP_045410"/>
    </isoform>
    <isoform>
        <id>Q14689-6</id>
        <name>6</name>
        <sequence type="described" ref="VSP_047246"/>
    </isoform>
</comment>
<comment type="tissue specificity">
    <text>Low expression in all tissues tested.</text>
</comment>
<comment type="similarity">
    <text evidence="9">Belongs to the DIP2 family.</text>
</comment>
<organism>
    <name type="scientific">Homo sapiens</name>
    <name type="common">Human</name>
    <dbReference type="NCBI Taxonomy" id="9606"/>
    <lineage>
        <taxon>Eukaryota</taxon>
        <taxon>Metazoa</taxon>
        <taxon>Chordata</taxon>
        <taxon>Craniata</taxon>
        <taxon>Vertebrata</taxon>
        <taxon>Euteleostomi</taxon>
        <taxon>Mammalia</taxon>
        <taxon>Eutheria</taxon>
        <taxon>Euarchontoglires</taxon>
        <taxon>Primates</taxon>
        <taxon>Haplorrhini</taxon>
        <taxon>Catarrhini</taxon>
        <taxon>Hominidae</taxon>
        <taxon>Homo</taxon>
    </lineage>
</organism>
<proteinExistence type="evidence at protein level"/>
<protein>
    <recommendedName>
        <fullName>Disco-interacting protein 2 homolog A</fullName>
        <shortName>DIP2 homolog A</shortName>
        <ecNumber evidence="1">6.2.1.1</ecNumber>
    </recommendedName>
</protein>
<keyword id="KW-0025">Alternative splicing</keyword>
<keyword id="KW-1003">Cell membrane</keyword>
<keyword id="KW-0966">Cell projection</keyword>
<keyword id="KW-0217">Developmental protein</keyword>
<keyword id="KW-0436">Ligase</keyword>
<keyword id="KW-0472">Membrane</keyword>
<keyword id="KW-0496">Mitochondrion</keyword>
<keyword id="KW-0524">Neurogenesis</keyword>
<keyword id="KW-0597">Phosphoprotein</keyword>
<keyword id="KW-1267">Proteomics identification</keyword>
<keyword id="KW-1185">Reference proteome</keyword>
<keyword id="KW-0770">Synapse</keyword>
<gene>
    <name type="primary">DIP2A</name>
    <name type="synonym">C21orf106</name>
    <name type="synonym">DIP2</name>
    <name type="synonym">KIAA0184</name>
</gene>
<reference key="1">
    <citation type="journal article" date="2002" name="Genomics">
        <title>Annotation of human chromosome 21 for relevance to Down syndrome: gene structure and expression analysis.</title>
        <authorList>
            <person name="Gardiner K."/>
            <person name="Slavov D."/>
            <person name="Bechtel L."/>
            <person name="Davisson M."/>
        </authorList>
    </citation>
    <scope>NUCLEOTIDE SEQUENCE [MRNA] (ISOFORM 6)</scope>
</reference>
<reference key="2">
    <citation type="journal article" date="2010" name="FEBS J.">
        <title>DIP2 disco-interacting protein 2 homolog A (Drosophila) is a candidate receptor for follistatin-related protein/follistatin-like 1--analysis of their binding with TGF-beta superfamily proteins.</title>
        <authorList>
            <person name="Tanaka M."/>
            <person name="Murakami K."/>
            <person name="Ozaki S."/>
            <person name="Imura Y."/>
            <person name="Tong X.P."/>
            <person name="Watanabe T."/>
            <person name="Sawaki T."/>
            <person name="Kawanami T."/>
            <person name="Kawabata D."/>
            <person name="Fujii T."/>
            <person name="Usui T."/>
            <person name="Masaki Y."/>
            <person name="Fukushima T."/>
            <person name="Jin Z.X."/>
            <person name="Umehara H."/>
            <person name="Mimori T."/>
        </authorList>
    </citation>
    <scope>NUCLEOTIDE SEQUENCE [MRNA] (ISOFORM 1)</scope>
    <scope>INTERACTION WITH FSTL1</scope>
</reference>
<reference key="3">
    <citation type="journal article" date="2004" name="Nat. Genet.">
        <title>Complete sequencing and characterization of 21,243 full-length human cDNAs.</title>
        <authorList>
            <person name="Ota T."/>
            <person name="Suzuki Y."/>
            <person name="Nishikawa T."/>
            <person name="Otsuki T."/>
            <person name="Sugiyama T."/>
            <person name="Irie R."/>
            <person name="Wakamatsu A."/>
            <person name="Hayashi K."/>
            <person name="Sato H."/>
            <person name="Nagai K."/>
            <person name="Kimura K."/>
            <person name="Makita H."/>
            <person name="Sekine M."/>
            <person name="Obayashi M."/>
            <person name="Nishi T."/>
            <person name="Shibahara T."/>
            <person name="Tanaka T."/>
            <person name="Ishii S."/>
            <person name="Yamamoto J."/>
            <person name="Saito K."/>
            <person name="Kawai Y."/>
            <person name="Isono Y."/>
            <person name="Nakamura Y."/>
            <person name="Nagahari K."/>
            <person name="Murakami K."/>
            <person name="Yasuda T."/>
            <person name="Iwayanagi T."/>
            <person name="Wagatsuma M."/>
            <person name="Shiratori A."/>
            <person name="Sudo H."/>
            <person name="Hosoiri T."/>
            <person name="Kaku Y."/>
            <person name="Kodaira H."/>
            <person name="Kondo H."/>
            <person name="Sugawara M."/>
            <person name="Takahashi M."/>
            <person name="Kanda K."/>
            <person name="Yokoi T."/>
            <person name="Furuya T."/>
            <person name="Kikkawa E."/>
            <person name="Omura Y."/>
            <person name="Abe K."/>
            <person name="Kamihara K."/>
            <person name="Katsuta N."/>
            <person name="Sato K."/>
            <person name="Tanikawa M."/>
            <person name="Yamazaki M."/>
            <person name="Ninomiya K."/>
            <person name="Ishibashi T."/>
            <person name="Yamashita H."/>
            <person name="Murakawa K."/>
            <person name="Fujimori K."/>
            <person name="Tanai H."/>
            <person name="Kimata M."/>
            <person name="Watanabe M."/>
            <person name="Hiraoka S."/>
            <person name="Chiba Y."/>
            <person name="Ishida S."/>
            <person name="Ono Y."/>
            <person name="Takiguchi S."/>
            <person name="Watanabe S."/>
            <person name="Yosida M."/>
            <person name="Hotuta T."/>
            <person name="Kusano J."/>
            <person name="Kanehori K."/>
            <person name="Takahashi-Fujii A."/>
            <person name="Hara H."/>
            <person name="Tanase T.-O."/>
            <person name="Nomura Y."/>
            <person name="Togiya S."/>
            <person name="Komai F."/>
            <person name="Hara R."/>
            <person name="Takeuchi K."/>
            <person name="Arita M."/>
            <person name="Imose N."/>
            <person name="Musashino K."/>
            <person name="Yuuki H."/>
            <person name="Oshima A."/>
            <person name="Sasaki N."/>
            <person name="Aotsuka S."/>
            <person name="Yoshikawa Y."/>
            <person name="Matsunawa H."/>
            <person name="Ichihara T."/>
            <person name="Shiohata N."/>
            <person name="Sano S."/>
            <person name="Moriya S."/>
            <person name="Momiyama H."/>
            <person name="Satoh N."/>
            <person name="Takami S."/>
            <person name="Terashima Y."/>
            <person name="Suzuki O."/>
            <person name="Nakagawa S."/>
            <person name="Senoh A."/>
            <person name="Mizoguchi H."/>
            <person name="Goto Y."/>
            <person name="Shimizu F."/>
            <person name="Wakebe H."/>
            <person name="Hishigaki H."/>
            <person name="Watanabe T."/>
            <person name="Sugiyama A."/>
            <person name="Takemoto M."/>
            <person name="Kawakami B."/>
            <person name="Yamazaki M."/>
            <person name="Watanabe K."/>
            <person name="Kumagai A."/>
            <person name="Itakura S."/>
            <person name="Fukuzumi Y."/>
            <person name="Fujimori Y."/>
            <person name="Komiyama M."/>
            <person name="Tashiro H."/>
            <person name="Tanigami A."/>
            <person name="Fujiwara T."/>
            <person name="Ono T."/>
            <person name="Yamada K."/>
            <person name="Fujii Y."/>
            <person name="Ozaki K."/>
            <person name="Hirao M."/>
            <person name="Ohmori Y."/>
            <person name="Kawabata A."/>
            <person name="Hikiji T."/>
            <person name="Kobatake N."/>
            <person name="Inagaki H."/>
            <person name="Ikema Y."/>
            <person name="Okamoto S."/>
            <person name="Okitani R."/>
            <person name="Kawakami T."/>
            <person name="Noguchi S."/>
            <person name="Itoh T."/>
            <person name="Shigeta K."/>
            <person name="Senba T."/>
            <person name="Matsumura K."/>
            <person name="Nakajima Y."/>
            <person name="Mizuno T."/>
            <person name="Morinaga M."/>
            <person name="Sasaki M."/>
            <person name="Togashi T."/>
            <person name="Oyama M."/>
            <person name="Hata H."/>
            <person name="Watanabe M."/>
            <person name="Komatsu T."/>
            <person name="Mizushima-Sugano J."/>
            <person name="Satoh T."/>
            <person name="Shirai Y."/>
            <person name="Takahashi Y."/>
            <person name="Nakagawa K."/>
            <person name="Okumura K."/>
            <person name="Nagase T."/>
            <person name="Nomura N."/>
            <person name="Kikuchi H."/>
            <person name="Masuho Y."/>
            <person name="Yamashita R."/>
            <person name="Nakai K."/>
            <person name="Yada T."/>
            <person name="Nakamura Y."/>
            <person name="Ohara O."/>
            <person name="Isogai T."/>
            <person name="Sugano S."/>
        </authorList>
    </citation>
    <scope>NUCLEOTIDE SEQUENCE [LARGE SCALE MRNA] (ISOFORMS 2 AND 5)</scope>
    <source>
        <tissue>Placenta</tissue>
        <tissue>Thymus</tissue>
    </source>
</reference>
<reference key="4">
    <citation type="journal article" date="2000" name="Nature">
        <title>The DNA sequence of human chromosome 21.</title>
        <authorList>
            <person name="Hattori M."/>
            <person name="Fujiyama A."/>
            <person name="Taylor T.D."/>
            <person name="Watanabe H."/>
            <person name="Yada T."/>
            <person name="Park H.-S."/>
            <person name="Toyoda A."/>
            <person name="Ishii K."/>
            <person name="Totoki Y."/>
            <person name="Choi D.-K."/>
            <person name="Groner Y."/>
            <person name="Soeda E."/>
            <person name="Ohki M."/>
            <person name="Takagi T."/>
            <person name="Sakaki Y."/>
            <person name="Taudien S."/>
            <person name="Blechschmidt K."/>
            <person name="Polley A."/>
            <person name="Menzel U."/>
            <person name="Delabar J."/>
            <person name="Kumpf K."/>
            <person name="Lehmann R."/>
            <person name="Patterson D."/>
            <person name="Reichwald K."/>
            <person name="Rump A."/>
            <person name="Schillhabel M."/>
            <person name="Schudy A."/>
            <person name="Zimmermann W."/>
            <person name="Rosenthal A."/>
            <person name="Kudoh J."/>
            <person name="Shibuya K."/>
            <person name="Kawasaki K."/>
            <person name="Asakawa S."/>
            <person name="Shintani A."/>
            <person name="Sasaki T."/>
            <person name="Nagamine K."/>
            <person name="Mitsuyama S."/>
            <person name="Antonarakis S.E."/>
            <person name="Minoshima S."/>
            <person name="Shimizu N."/>
            <person name="Nordsiek G."/>
            <person name="Hornischer K."/>
            <person name="Brandt P."/>
            <person name="Scharfe M."/>
            <person name="Schoen O."/>
            <person name="Desario A."/>
            <person name="Reichelt J."/>
            <person name="Kauer G."/>
            <person name="Bloecker H."/>
            <person name="Ramser J."/>
            <person name="Beck A."/>
            <person name="Klages S."/>
            <person name="Hennig S."/>
            <person name="Riesselmann L."/>
            <person name="Dagand E."/>
            <person name="Wehrmeyer S."/>
            <person name="Borzym K."/>
            <person name="Gardiner K."/>
            <person name="Nizetic D."/>
            <person name="Francis F."/>
            <person name="Lehrach H."/>
            <person name="Reinhardt R."/>
            <person name="Yaspo M.-L."/>
        </authorList>
    </citation>
    <scope>NUCLEOTIDE SEQUENCE [LARGE SCALE GENOMIC DNA]</scope>
</reference>
<reference key="5">
    <citation type="journal article" date="2004" name="Genome Res.">
        <title>The status, quality, and expansion of the NIH full-length cDNA project: the Mammalian Gene Collection (MGC).</title>
        <authorList>
            <consortium name="The MGC Project Team"/>
        </authorList>
    </citation>
    <scope>NUCLEOTIDE SEQUENCE [LARGE SCALE MRNA] (ISOFORMS 3 AND 4)</scope>
    <source>
        <tissue>Blood</tissue>
        <tissue>Mammary carcinoma</tissue>
    </source>
</reference>
<reference key="6">
    <citation type="journal article" date="1996" name="DNA Res.">
        <title>Prediction of the coding sequences of unidentified human genes. V. The coding sequences of 40 new genes (KIAA0161-KIAA0200) deduced by analysis of cDNA clones from human cell line KG-1.</title>
        <authorList>
            <person name="Nagase T."/>
            <person name="Seki N."/>
            <person name="Ishikawa K."/>
            <person name="Tanaka A."/>
            <person name="Nomura N."/>
        </authorList>
    </citation>
    <scope>NUCLEOTIDE SEQUENCE [LARGE SCALE MRNA] OF 705-1567 (ISOFORM 1)</scope>
    <source>
        <tissue>Bone marrow</tissue>
    </source>
</reference>
<reference key="7">
    <citation type="journal article" date="2010" name="J. Biol. Chem.">
        <title>DIP2A functions as a FSTL1 receptor.</title>
        <authorList>
            <person name="Ouchi N."/>
            <person name="Asaumi Y."/>
            <person name="Ohashi K."/>
            <person name="Higuchi A."/>
            <person name="Sono-Romanelli S."/>
            <person name="Oshima Y."/>
            <person name="Walsh K."/>
        </authorList>
    </citation>
    <scope>FUNCTION</scope>
    <scope>INTERACTION WITH FSTL1</scope>
    <scope>SUBCELLULAR LOCATION</scope>
    <scope>IDENTIFICATION BY MASS SPECTROMETRY</scope>
</reference>
<reference key="8">
    <citation type="journal article" date="2013" name="J. Proteome Res.">
        <title>Toward a comprehensive characterization of a human cancer cell phosphoproteome.</title>
        <authorList>
            <person name="Zhou H."/>
            <person name="Di Palma S."/>
            <person name="Preisinger C."/>
            <person name="Peng M."/>
            <person name="Polat A.N."/>
            <person name="Heck A.J."/>
            <person name="Mohammed S."/>
        </authorList>
    </citation>
    <scope>PHOSPHORYLATION [LARGE SCALE ANALYSIS] AT SER-94 AND THR-155</scope>
    <scope>IDENTIFICATION BY MASS SPECTROMETRY [LARGE SCALE ANALYSIS]</scope>
    <source>
        <tissue>Cervix carcinoma</tissue>
        <tissue>Erythroleukemia</tissue>
    </source>
</reference>
<dbReference type="EC" id="6.2.1.1" evidence="1"/>
<dbReference type="EMBL" id="AF490768">
    <property type="protein sequence ID" value="AAM18046.1"/>
    <property type="molecule type" value="mRNA"/>
</dbReference>
<dbReference type="EMBL" id="AB273729">
    <property type="protein sequence ID" value="BAF69070.1"/>
    <property type="molecule type" value="mRNA"/>
</dbReference>
<dbReference type="EMBL" id="AK056738">
    <property type="protein sequence ID" value="BAB71268.1"/>
    <property type="molecule type" value="mRNA"/>
</dbReference>
<dbReference type="EMBL" id="AK303351">
    <property type="protein sequence ID" value="BAG64412.1"/>
    <property type="molecule type" value="mRNA"/>
</dbReference>
<dbReference type="EMBL" id="AP000337">
    <property type="status" value="NOT_ANNOTATED_CDS"/>
    <property type="molecule type" value="Genomic_DNA"/>
</dbReference>
<dbReference type="EMBL" id="AP000338">
    <property type="status" value="NOT_ANNOTATED_CDS"/>
    <property type="molecule type" value="Genomic_DNA"/>
</dbReference>
<dbReference type="EMBL" id="BC033718">
    <property type="protein sequence ID" value="AAH33718.1"/>
    <property type="molecule type" value="mRNA"/>
</dbReference>
<dbReference type="EMBL" id="BC038443">
    <property type="protein sequence ID" value="AAH38443.1"/>
    <property type="molecule type" value="mRNA"/>
</dbReference>
<dbReference type="EMBL" id="D80006">
    <property type="protein sequence ID" value="BAA11501.1"/>
    <property type="molecule type" value="mRNA"/>
</dbReference>
<dbReference type="CCDS" id="CCDS46655.1">
    <molecule id="Q14689-1"/>
</dbReference>
<dbReference type="CCDS" id="CCDS46656.1">
    <molecule id="Q14689-4"/>
</dbReference>
<dbReference type="CCDS" id="CCDS46657.1">
    <molecule id="Q14689-2"/>
</dbReference>
<dbReference type="CCDS" id="CCDS54490.1">
    <molecule id="Q14689-6"/>
</dbReference>
<dbReference type="CCDS" id="CCDS54491.1">
    <molecule id="Q14689-3"/>
</dbReference>
<dbReference type="RefSeq" id="NP_001139587.1">
    <molecule id="Q14689-3"/>
    <property type="nucleotide sequence ID" value="NM_001146115.2"/>
</dbReference>
<dbReference type="RefSeq" id="NP_001139588.1">
    <molecule id="Q14689-6"/>
    <property type="nucleotide sequence ID" value="NM_001146116.2"/>
</dbReference>
<dbReference type="RefSeq" id="NP_001340872.1">
    <molecule id="Q14689-1"/>
    <property type="nucleotide sequence ID" value="NM_001353943.2"/>
</dbReference>
<dbReference type="RefSeq" id="NP_055966.2">
    <molecule id="Q14689-1"/>
    <property type="nucleotide sequence ID" value="NM_015151.3"/>
</dbReference>
<dbReference type="RefSeq" id="NP_996772.1">
    <molecule id="Q14689-4"/>
    <property type="nucleotide sequence ID" value="NM_206889.3"/>
</dbReference>
<dbReference type="RefSeq" id="NP_996773.1">
    <molecule id="Q14689-2"/>
    <property type="nucleotide sequence ID" value="NM_206890.3"/>
</dbReference>
<dbReference type="RefSeq" id="NP_996774.1">
    <property type="nucleotide sequence ID" value="NM_206891.2"/>
</dbReference>
<dbReference type="RefSeq" id="XP_016883784.1">
    <property type="nucleotide sequence ID" value="XM_017028295.1"/>
</dbReference>
<dbReference type="RefSeq" id="XP_016883785.1">
    <property type="nucleotide sequence ID" value="XM_017028296.1"/>
</dbReference>
<dbReference type="SMR" id="Q14689"/>
<dbReference type="BioGRID" id="116793">
    <property type="interactions" value="117"/>
</dbReference>
<dbReference type="FunCoup" id="Q14689">
    <property type="interactions" value="1949"/>
</dbReference>
<dbReference type="IntAct" id="Q14689">
    <property type="interactions" value="81"/>
</dbReference>
<dbReference type="MINT" id="Q14689"/>
<dbReference type="STRING" id="9606.ENSP00000392066"/>
<dbReference type="GlyCosmos" id="Q14689">
    <property type="glycosylation" value="2 sites, 1 glycan"/>
</dbReference>
<dbReference type="GlyGen" id="Q14689">
    <property type="glycosylation" value="3 sites, 1 O-linked glycan (2 sites)"/>
</dbReference>
<dbReference type="iPTMnet" id="Q14689"/>
<dbReference type="PhosphoSitePlus" id="Q14689"/>
<dbReference type="BioMuta" id="DIP2A"/>
<dbReference type="DMDM" id="32700084"/>
<dbReference type="jPOST" id="Q14689"/>
<dbReference type="MassIVE" id="Q14689"/>
<dbReference type="PaxDb" id="9606-ENSP00000392066"/>
<dbReference type="PeptideAtlas" id="Q14689"/>
<dbReference type="ProteomicsDB" id="16898"/>
<dbReference type="ProteomicsDB" id="60124">
    <molecule id="Q14689-1"/>
</dbReference>
<dbReference type="ProteomicsDB" id="60125">
    <molecule id="Q14689-2"/>
</dbReference>
<dbReference type="ProteomicsDB" id="60126">
    <molecule id="Q14689-3"/>
</dbReference>
<dbReference type="ProteomicsDB" id="60127">
    <molecule id="Q14689-4"/>
</dbReference>
<dbReference type="Pumba" id="Q14689"/>
<dbReference type="Antibodypedia" id="24717">
    <property type="antibodies" value="145 antibodies from 20 providers"/>
</dbReference>
<dbReference type="DNASU" id="23181"/>
<dbReference type="Ensembl" id="ENST00000400274.5">
    <molecule id="Q14689-6"/>
    <property type="protein sequence ID" value="ENSP00000383133.1"/>
    <property type="gene ID" value="ENSG00000160305.19"/>
</dbReference>
<dbReference type="Ensembl" id="ENST00000417564.3">
    <molecule id="Q14689-1"/>
    <property type="protein sequence ID" value="ENSP00000392066.2"/>
    <property type="gene ID" value="ENSG00000160305.19"/>
</dbReference>
<dbReference type="Ensembl" id="ENST00000435722.7">
    <molecule id="Q14689-2"/>
    <property type="protein sequence ID" value="ENSP00000415089.3"/>
    <property type="gene ID" value="ENSG00000160305.19"/>
</dbReference>
<dbReference type="Ensembl" id="ENST00000457905.7">
    <molecule id="Q14689-4"/>
    <property type="protein sequence ID" value="ENSP00000393434.3"/>
    <property type="gene ID" value="ENSG00000160305.19"/>
</dbReference>
<dbReference type="Ensembl" id="ENST00000466639.5">
    <molecule id="Q14689-3"/>
    <property type="protein sequence ID" value="ENSP00000430249.1"/>
    <property type="gene ID" value="ENSG00000160305.19"/>
</dbReference>
<dbReference type="Ensembl" id="ENST00000850580.1">
    <molecule id="Q14689-1"/>
    <property type="protein sequence ID" value="ENSP00000520868.1"/>
    <property type="gene ID" value="ENSG00000160305.19"/>
</dbReference>
<dbReference type="GeneID" id="23181"/>
<dbReference type="KEGG" id="hsa:23181"/>
<dbReference type="MANE-Select" id="ENST00000417564.3">
    <property type="protein sequence ID" value="ENSP00000392066.2"/>
    <property type="RefSeq nucleotide sequence ID" value="NM_015151.4"/>
    <property type="RefSeq protein sequence ID" value="NP_055966.2"/>
</dbReference>
<dbReference type="UCSC" id="uc002zjm.4">
    <molecule id="Q14689-1"/>
    <property type="organism name" value="human"/>
</dbReference>
<dbReference type="AGR" id="HGNC:17217"/>
<dbReference type="CTD" id="23181"/>
<dbReference type="DisGeNET" id="23181"/>
<dbReference type="GeneCards" id="DIP2A"/>
<dbReference type="HGNC" id="HGNC:17217">
    <property type="gene designation" value="DIP2A"/>
</dbReference>
<dbReference type="HPA" id="ENSG00000160305">
    <property type="expression patterns" value="Low tissue specificity"/>
</dbReference>
<dbReference type="MalaCards" id="DIP2A"/>
<dbReference type="MIM" id="607711">
    <property type="type" value="gene"/>
</dbReference>
<dbReference type="neXtProt" id="NX_Q14689"/>
<dbReference type="OpenTargets" id="ENSG00000160305"/>
<dbReference type="PharmGKB" id="PA134888233"/>
<dbReference type="VEuPathDB" id="HostDB:ENSG00000160305"/>
<dbReference type="eggNOG" id="KOG3628">
    <property type="taxonomic scope" value="Eukaryota"/>
</dbReference>
<dbReference type="GeneTree" id="ENSGT00950000182997"/>
<dbReference type="HOGENOM" id="CLU_001345_0_0_1"/>
<dbReference type="InParanoid" id="Q14689"/>
<dbReference type="OMA" id="CERPQVA"/>
<dbReference type="OrthoDB" id="69964at2759"/>
<dbReference type="PAN-GO" id="Q14689">
    <property type="GO annotations" value="1 GO annotation based on evolutionary models"/>
</dbReference>
<dbReference type="PhylomeDB" id="Q14689"/>
<dbReference type="TreeFam" id="TF312871"/>
<dbReference type="PathwayCommons" id="Q14689"/>
<dbReference type="SignaLink" id="Q14689"/>
<dbReference type="SIGNOR" id="Q14689"/>
<dbReference type="BioGRID-ORCS" id="23181">
    <property type="hits" value="9 hits in 1161 CRISPR screens"/>
</dbReference>
<dbReference type="ChiTaRS" id="DIP2A">
    <property type="organism name" value="human"/>
</dbReference>
<dbReference type="GeneWiki" id="DIP2A"/>
<dbReference type="GenomeRNAi" id="23181"/>
<dbReference type="Pharos" id="Q14689">
    <property type="development level" value="Tbio"/>
</dbReference>
<dbReference type="PRO" id="PR:Q14689"/>
<dbReference type="Proteomes" id="UP000005640">
    <property type="component" value="Chromosome 21"/>
</dbReference>
<dbReference type="RNAct" id="Q14689">
    <property type="molecule type" value="protein"/>
</dbReference>
<dbReference type="Bgee" id="ENSG00000160305">
    <property type="expression patterns" value="Expressed in visceral pleura and 206 other cell types or tissues"/>
</dbReference>
<dbReference type="ExpressionAtlas" id="Q14689">
    <property type="expression patterns" value="baseline and differential"/>
</dbReference>
<dbReference type="GO" id="GO:0009986">
    <property type="term" value="C:cell surface"/>
    <property type="evidence" value="ECO:0000314"/>
    <property type="project" value="UniProtKB"/>
</dbReference>
<dbReference type="GO" id="GO:0043197">
    <property type="term" value="C:dendritic spine"/>
    <property type="evidence" value="ECO:0000250"/>
    <property type="project" value="UniProtKB"/>
</dbReference>
<dbReference type="GO" id="GO:0016020">
    <property type="term" value="C:membrane"/>
    <property type="evidence" value="ECO:0000314"/>
    <property type="project" value="UniProtKB"/>
</dbReference>
<dbReference type="GO" id="GO:0005739">
    <property type="term" value="C:mitochondrion"/>
    <property type="evidence" value="ECO:0000250"/>
    <property type="project" value="UniProtKB"/>
</dbReference>
<dbReference type="GO" id="GO:0005886">
    <property type="term" value="C:plasma membrane"/>
    <property type="evidence" value="ECO:0007669"/>
    <property type="project" value="UniProtKB-SubCell"/>
</dbReference>
<dbReference type="GO" id="GO:0003987">
    <property type="term" value="F:acetate-CoA ligase activity"/>
    <property type="evidence" value="ECO:0007669"/>
    <property type="project" value="UniProtKB-EC"/>
</dbReference>
<dbReference type="GO" id="GO:0006085">
    <property type="term" value="P:acetyl-CoA biosynthetic process"/>
    <property type="evidence" value="ECO:0000250"/>
    <property type="project" value="UniProtKB"/>
</dbReference>
<dbReference type="GO" id="GO:0060997">
    <property type="term" value="P:dendritic spine morphogenesis"/>
    <property type="evidence" value="ECO:0000250"/>
    <property type="project" value="UniProtKB"/>
</dbReference>
<dbReference type="GO" id="GO:0010629">
    <property type="term" value="P:negative regulation of gene expression"/>
    <property type="evidence" value="ECO:0000314"/>
    <property type="project" value="UniProtKB"/>
</dbReference>
<dbReference type="GO" id="GO:2000758">
    <property type="term" value="P:positive regulation of peptidyl-lysine acetylation"/>
    <property type="evidence" value="ECO:0000250"/>
    <property type="project" value="UniProtKB"/>
</dbReference>
<dbReference type="CDD" id="cd05905">
    <property type="entry name" value="Dip2"/>
    <property type="match status" value="2"/>
</dbReference>
<dbReference type="FunFam" id="3.30.300.30:FF:000003">
    <property type="entry name" value="DIP2 disco-interacting protein 2 homolog A"/>
    <property type="match status" value="1"/>
</dbReference>
<dbReference type="FunFam" id="3.30.300.30:FF:000001">
    <property type="entry name" value="DIP2 disco-interacting protein 2 homolog C"/>
    <property type="match status" value="1"/>
</dbReference>
<dbReference type="FunFam" id="3.40.50.12780:FF:000004">
    <property type="entry name" value="Disco interacting protein 2 homolog A"/>
    <property type="match status" value="1"/>
</dbReference>
<dbReference type="FunFam" id="3.40.50.12780:FF:000002">
    <property type="entry name" value="Disco interacting protein 2 homolog B"/>
    <property type="match status" value="1"/>
</dbReference>
<dbReference type="Gene3D" id="3.30.300.30">
    <property type="match status" value="2"/>
</dbReference>
<dbReference type="Gene3D" id="3.40.50.12780">
    <property type="entry name" value="N-terminal domain of ligase-like"/>
    <property type="match status" value="2"/>
</dbReference>
<dbReference type="InterPro" id="IPR025110">
    <property type="entry name" value="AMP-bd_C"/>
</dbReference>
<dbReference type="InterPro" id="IPR045851">
    <property type="entry name" value="AMP-bd_C_sf"/>
</dbReference>
<dbReference type="InterPro" id="IPR000873">
    <property type="entry name" value="AMP-dep_synth/lig_dom"/>
</dbReference>
<dbReference type="InterPro" id="IPR042099">
    <property type="entry name" value="ANL_N_sf"/>
</dbReference>
<dbReference type="InterPro" id="IPR037337">
    <property type="entry name" value="Dip2-like_dom"/>
</dbReference>
<dbReference type="InterPro" id="IPR010506">
    <property type="entry name" value="DMAP1-bd"/>
</dbReference>
<dbReference type="PANTHER" id="PTHR22754">
    <property type="entry name" value="DISCO-INTERACTING PROTEIN 2 DIP2 -RELATED"/>
    <property type="match status" value="1"/>
</dbReference>
<dbReference type="PANTHER" id="PTHR22754:SF34">
    <property type="entry name" value="DISCO-INTERACTING PROTEIN 2 HOMOLOG A"/>
    <property type="match status" value="1"/>
</dbReference>
<dbReference type="Pfam" id="PF00501">
    <property type="entry name" value="AMP-binding"/>
    <property type="match status" value="2"/>
</dbReference>
<dbReference type="Pfam" id="PF23024">
    <property type="entry name" value="AMP-dom_DIP2-like"/>
    <property type="match status" value="1"/>
</dbReference>
<dbReference type="Pfam" id="PF06464">
    <property type="entry name" value="DMAP_binding"/>
    <property type="match status" value="1"/>
</dbReference>
<dbReference type="SMART" id="SM01137">
    <property type="entry name" value="DMAP_binding"/>
    <property type="match status" value="1"/>
</dbReference>
<dbReference type="SUPFAM" id="SSF56801">
    <property type="entry name" value="Acetyl-CoA synthetase-like"/>
    <property type="match status" value="2"/>
</dbReference>
<dbReference type="PROSITE" id="PS51912">
    <property type="entry name" value="DMAP1_BIND"/>
    <property type="match status" value="1"/>
</dbReference>
<sequence>MADRGCPLEAAPLPAEVRESLAELELELSEGDITQKGYEKKRAKLLARYIPLIQGIDPSLQAENRIPGPSQTTAAAPKQQKSRPTASRDERFRSDVHTEAVQAALAKYKERKMPMPSKRRSVLVHSSVETYTPPDTSSASEDEGSLRRPGRLTSTPLQSHSSVEPWLDRVIQGSSTSSSASSTSSHPGGRPTTAPSAAATPGAAATTALAGLEAHTHIDLHSAPPDVTTGLVEHSYFERPQVASVRSVPRGCSGSMLETADGVPVNSRVSSKIQQLLNTLKRPKRPPLKEFFVDDFEELLEVQQPDPNQPKPEGSETSVLRGEPLTAGVPRPPSLLATLQRWGTTQPKSPCLTALDTTGKAVYTLTYGKLWSRSLKLAYTLLNKLTSKNEPLLKPGDRVALVFPNSDPVMFMVAFYGCLLAELVPVPIEVPLTRKDAGSQQVGFLLGSCGVFLALTTDACQKGLPKAQTGEVAAFKGWPPLSWLVIDGKHLAKPPKDWHPLAQDTGTGTAYIEYKTSKEGSTVGVTVSHASLLAQCRALTQACGYSEAETLTNVLDFKRDAGLWHGVLTSVMNRMHVVSVPYALMKANPLSWIQKVCFYKARAALVKSRDMHWSLLAQRGQRDVSLSSLRMLIVADGANPWSISSCDAFLNVFQSRGLRPEVICPCASSPEALTVAIRRPPDLGGPPPRKAVLSMNGLSYGVIRVDTEEKLSVLTVQDVGQVMPGANVCVVKLEGTPYLCKTDEVGEICVSSSATGTAYYGLLGITKNVFEAVPVTTGGAPIFDRPFTRTGLLGFIGPDNLVFIVGKLDGLMVTGVRRHNADDVVATALAVEPMKFVYRGRIAVFSVTVLHDDRIVLVAEQRPDASEEDSFQWMSRVLQAIDSIHQVGVYCLALVPANTLPKAPLGGIHISETKQRFLEGTLHPCNVLMCPHTCVTNLPKPRQKQPEVGPASMIVGNLVAGKRIAQASGRELAHLEDSDQARKFLFLADVLQWRAHTTPDHPLFLLLNAKGTVTSTATCVQLHKRAERVAAALMEKGRLSVGDHVALVYPPGVDLIAAFYGCLYCGCVPVTVRPPHPQNLGTTLPTVKMIVEVSKSACVLTTQAVTRLLRSKEAAAAVDIRTWPTILDTDDIPKKKIASVFRPPSPDVLAYLDFSVSTTGILAGVKMSHAATSALCRSIKLQCELYPSRQIAICLDPYCGLGFALWCLCSVYSGHQSVLVPPLELESNVSLWLSAVSQYKARVTFCSYSVMEMCTKGLGAQTGVLRMKGVNLSCVRTCMVVAEERPRIALTQSFSKLFKDLGLPARAVSTTFGCRVNVAICLQGTAGPDPTTVYVDMRALRHDRVRLVERGSPHSLPLMESGKILPGVKVIIAHTETKGPLGDSHLGEIWVSSPHNATGYYTVYGEEALHADHFSARLSFGDTQTIWARTGYLGFLRRTELTDASGGRHDALYVVGSLDETLELRGMRYHPIDIETSVIRAHRSIAECAVFTWTNLLVVVVELDGLEQDALDLVALVTNVVLEEHYLVVGVVVIVDPGVIPINSRGEKQRMHLRDGFLADQLDPIYVAYNM</sequence>